<accession>B6J7H5</accession>
<organism>
    <name type="scientific">Coxiella burnetii (strain CbuK_Q154)</name>
    <name type="common">Coxiella burnetii (strain Q154)</name>
    <dbReference type="NCBI Taxonomy" id="434924"/>
    <lineage>
        <taxon>Bacteria</taxon>
        <taxon>Pseudomonadati</taxon>
        <taxon>Pseudomonadota</taxon>
        <taxon>Gammaproteobacteria</taxon>
        <taxon>Legionellales</taxon>
        <taxon>Coxiellaceae</taxon>
        <taxon>Coxiella</taxon>
    </lineage>
</organism>
<sequence length="371" mass="41940">MGIIFYTTQMPNFEQNQVIAVGLSGGVDSSVAALVLKEKGYEVIGLFMQNWETDSKDPFCTAEQDLSDAKAIADHIGIPLYVVNFSKAYWNHVFQHCLDEFAQGRTPNPDVWCNREIKFKSLLDHAKKLGATHLATGHYACIQNENNEYRLLKSNDSHKDQSYFLHLLNQYQLANSVFPIGGYQKSEVRAIAKKRGFINHAKKDSTGICFIGERKFKDFLNEFLLAQPGNIETPEGKIIGKHDGIMFYTVGQRKGLHIGGRPDAGEAPWYVVDKDVKRNVLIVVQGYEHPLLYSQELTCTNLHWIRDTEPSFPLTCKAKTRCRQADQTCVITRLDNDHCHVQFEHPQRAITRGQSVVFYLGNECLGGGIIN</sequence>
<feature type="chain" id="PRO_1000203303" description="tRNA-specific 2-thiouridylase MnmA">
    <location>
        <begin position="1"/>
        <end position="371"/>
    </location>
</feature>
<feature type="region of interest" description="Interaction with target base in tRNA" evidence="1">
    <location>
        <begin position="108"/>
        <end position="110"/>
    </location>
</feature>
<feature type="region of interest" description="Interaction with tRNA" evidence="1">
    <location>
        <begin position="159"/>
        <end position="161"/>
    </location>
</feature>
<feature type="active site" description="Nucleophile" evidence="1">
    <location>
        <position position="113"/>
    </location>
</feature>
<feature type="active site" description="Cysteine persulfide intermediate" evidence="1">
    <location>
        <position position="209"/>
    </location>
</feature>
<feature type="binding site" evidence="1">
    <location>
        <begin position="22"/>
        <end position="29"/>
    </location>
    <ligand>
        <name>ATP</name>
        <dbReference type="ChEBI" id="CHEBI:30616"/>
    </ligand>
</feature>
<feature type="binding site" evidence="1">
    <location>
        <position position="48"/>
    </location>
    <ligand>
        <name>ATP</name>
        <dbReference type="ChEBI" id="CHEBI:30616"/>
    </ligand>
</feature>
<feature type="binding site" evidence="1">
    <location>
        <position position="137"/>
    </location>
    <ligand>
        <name>ATP</name>
        <dbReference type="ChEBI" id="CHEBI:30616"/>
    </ligand>
</feature>
<feature type="site" description="Interaction with tRNA" evidence="1">
    <location>
        <position position="138"/>
    </location>
</feature>
<feature type="site" description="Interaction with tRNA" evidence="1">
    <location>
        <position position="354"/>
    </location>
</feature>
<feature type="disulfide bond" description="Alternate" evidence="1">
    <location>
        <begin position="113"/>
        <end position="209"/>
    </location>
</feature>
<keyword id="KW-0067">ATP-binding</keyword>
<keyword id="KW-0963">Cytoplasm</keyword>
<keyword id="KW-1015">Disulfide bond</keyword>
<keyword id="KW-0547">Nucleotide-binding</keyword>
<keyword id="KW-0694">RNA-binding</keyword>
<keyword id="KW-0808">Transferase</keyword>
<keyword id="KW-0819">tRNA processing</keyword>
<keyword id="KW-0820">tRNA-binding</keyword>
<protein>
    <recommendedName>
        <fullName evidence="1">tRNA-specific 2-thiouridylase MnmA</fullName>
        <ecNumber evidence="1">2.8.1.13</ecNumber>
    </recommendedName>
</protein>
<reference key="1">
    <citation type="journal article" date="2009" name="Infect. Immun.">
        <title>Comparative genomics reveal extensive transposon-mediated genomic plasticity and diversity among potential effector proteins within the genus Coxiella.</title>
        <authorList>
            <person name="Beare P.A."/>
            <person name="Unsworth N."/>
            <person name="Andoh M."/>
            <person name="Voth D.E."/>
            <person name="Omsland A."/>
            <person name="Gilk S.D."/>
            <person name="Williams K.P."/>
            <person name="Sobral B.W."/>
            <person name="Kupko J.J. III"/>
            <person name="Porcella S.F."/>
            <person name="Samuel J.E."/>
            <person name="Heinzen R.A."/>
        </authorList>
    </citation>
    <scope>NUCLEOTIDE SEQUENCE [LARGE SCALE GENOMIC DNA]</scope>
    <source>
        <strain>CbuK_Q154</strain>
    </source>
</reference>
<comment type="function">
    <text evidence="1">Catalyzes the 2-thiolation of uridine at the wobble position (U34) of tRNA, leading to the formation of s(2)U34.</text>
</comment>
<comment type="catalytic activity">
    <reaction evidence="1">
        <text>S-sulfanyl-L-cysteinyl-[protein] + uridine(34) in tRNA + AH2 + ATP = 2-thiouridine(34) in tRNA + L-cysteinyl-[protein] + A + AMP + diphosphate + H(+)</text>
        <dbReference type="Rhea" id="RHEA:47032"/>
        <dbReference type="Rhea" id="RHEA-COMP:10131"/>
        <dbReference type="Rhea" id="RHEA-COMP:11726"/>
        <dbReference type="Rhea" id="RHEA-COMP:11727"/>
        <dbReference type="Rhea" id="RHEA-COMP:11728"/>
        <dbReference type="ChEBI" id="CHEBI:13193"/>
        <dbReference type="ChEBI" id="CHEBI:15378"/>
        <dbReference type="ChEBI" id="CHEBI:17499"/>
        <dbReference type="ChEBI" id="CHEBI:29950"/>
        <dbReference type="ChEBI" id="CHEBI:30616"/>
        <dbReference type="ChEBI" id="CHEBI:33019"/>
        <dbReference type="ChEBI" id="CHEBI:61963"/>
        <dbReference type="ChEBI" id="CHEBI:65315"/>
        <dbReference type="ChEBI" id="CHEBI:87170"/>
        <dbReference type="ChEBI" id="CHEBI:456215"/>
        <dbReference type="EC" id="2.8.1.13"/>
    </reaction>
</comment>
<comment type="subcellular location">
    <subcellularLocation>
        <location evidence="1">Cytoplasm</location>
    </subcellularLocation>
</comment>
<comment type="similarity">
    <text evidence="1">Belongs to the MnmA/TRMU family.</text>
</comment>
<proteinExistence type="inferred from homology"/>
<gene>
    <name evidence="1" type="primary">mnmA</name>
    <name type="ordered locus">CbuK_1014</name>
</gene>
<evidence type="ECO:0000255" key="1">
    <source>
        <dbReference type="HAMAP-Rule" id="MF_00144"/>
    </source>
</evidence>
<name>MNMA_COXB1</name>
<dbReference type="EC" id="2.8.1.13" evidence="1"/>
<dbReference type="EMBL" id="CP001020">
    <property type="protein sequence ID" value="ACJ20224.1"/>
    <property type="molecule type" value="Genomic_DNA"/>
</dbReference>
<dbReference type="SMR" id="B6J7H5"/>
<dbReference type="KEGG" id="cbc:CbuK_1014"/>
<dbReference type="HOGENOM" id="CLU_035188_1_0_6"/>
<dbReference type="GO" id="GO:0005737">
    <property type="term" value="C:cytoplasm"/>
    <property type="evidence" value="ECO:0007669"/>
    <property type="project" value="UniProtKB-SubCell"/>
</dbReference>
<dbReference type="GO" id="GO:0005524">
    <property type="term" value="F:ATP binding"/>
    <property type="evidence" value="ECO:0007669"/>
    <property type="project" value="UniProtKB-KW"/>
</dbReference>
<dbReference type="GO" id="GO:0000049">
    <property type="term" value="F:tRNA binding"/>
    <property type="evidence" value="ECO:0007669"/>
    <property type="project" value="UniProtKB-KW"/>
</dbReference>
<dbReference type="GO" id="GO:0103016">
    <property type="term" value="F:tRNA-uridine 2-sulfurtransferase activity"/>
    <property type="evidence" value="ECO:0007669"/>
    <property type="project" value="UniProtKB-EC"/>
</dbReference>
<dbReference type="GO" id="GO:0002143">
    <property type="term" value="P:tRNA wobble position uridine thiolation"/>
    <property type="evidence" value="ECO:0007669"/>
    <property type="project" value="TreeGrafter"/>
</dbReference>
<dbReference type="CDD" id="cd01998">
    <property type="entry name" value="MnmA_TRMU-like"/>
    <property type="match status" value="1"/>
</dbReference>
<dbReference type="FunFam" id="2.30.30.280:FF:000001">
    <property type="entry name" value="tRNA-specific 2-thiouridylase MnmA"/>
    <property type="match status" value="1"/>
</dbReference>
<dbReference type="FunFam" id="2.40.30.10:FF:000023">
    <property type="entry name" value="tRNA-specific 2-thiouridylase MnmA"/>
    <property type="match status" value="1"/>
</dbReference>
<dbReference type="FunFam" id="3.40.50.620:FF:000004">
    <property type="entry name" value="tRNA-specific 2-thiouridylase MnmA"/>
    <property type="match status" value="1"/>
</dbReference>
<dbReference type="Gene3D" id="2.30.30.280">
    <property type="entry name" value="Adenine nucleotide alpha hydrolases-like domains"/>
    <property type="match status" value="1"/>
</dbReference>
<dbReference type="Gene3D" id="3.40.50.620">
    <property type="entry name" value="HUPs"/>
    <property type="match status" value="1"/>
</dbReference>
<dbReference type="Gene3D" id="2.40.30.10">
    <property type="entry name" value="Translation factors"/>
    <property type="match status" value="1"/>
</dbReference>
<dbReference type="HAMAP" id="MF_00144">
    <property type="entry name" value="tRNA_thiouridyl_MnmA"/>
    <property type="match status" value="1"/>
</dbReference>
<dbReference type="InterPro" id="IPR004506">
    <property type="entry name" value="MnmA-like"/>
</dbReference>
<dbReference type="InterPro" id="IPR046885">
    <property type="entry name" value="MnmA-like_C"/>
</dbReference>
<dbReference type="InterPro" id="IPR046884">
    <property type="entry name" value="MnmA-like_central"/>
</dbReference>
<dbReference type="InterPro" id="IPR023382">
    <property type="entry name" value="MnmA-like_central_sf"/>
</dbReference>
<dbReference type="InterPro" id="IPR014729">
    <property type="entry name" value="Rossmann-like_a/b/a_fold"/>
</dbReference>
<dbReference type="NCBIfam" id="NF001138">
    <property type="entry name" value="PRK00143.1"/>
    <property type="match status" value="1"/>
</dbReference>
<dbReference type="NCBIfam" id="TIGR00420">
    <property type="entry name" value="trmU"/>
    <property type="match status" value="1"/>
</dbReference>
<dbReference type="PANTHER" id="PTHR11933:SF5">
    <property type="entry name" value="MITOCHONDRIAL TRNA-SPECIFIC 2-THIOURIDYLASE 1"/>
    <property type="match status" value="1"/>
</dbReference>
<dbReference type="PANTHER" id="PTHR11933">
    <property type="entry name" value="TRNA 5-METHYLAMINOMETHYL-2-THIOURIDYLATE -METHYLTRANSFERASE"/>
    <property type="match status" value="1"/>
</dbReference>
<dbReference type="Pfam" id="PF03054">
    <property type="entry name" value="tRNA_Me_trans"/>
    <property type="match status" value="1"/>
</dbReference>
<dbReference type="Pfam" id="PF20258">
    <property type="entry name" value="tRNA_Me_trans_C"/>
    <property type="match status" value="1"/>
</dbReference>
<dbReference type="Pfam" id="PF20259">
    <property type="entry name" value="tRNA_Me_trans_M"/>
    <property type="match status" value="1"/>
</dbReference>
<dbReference type="SUPFAM" id="SSF52402">
    <property type="entry name" value="Adenine nucleotide alpha hydrolases-like"/>
    <property type="match status" value="1"/>
</dbReference>